<feature type="chain" id="PRO_0000119701" description="Glutamate--tRNA ligase 1">
    <location>
        <begin position="1"/>
        <end position="440"/>
    </location>
</feature>
<feature type="short sequence motif" description="'HIGH' region" evidence="1">
    <location>
        <begin position="7"/>
        <end position="17"/>
    </location>
</feature>
<feature type="short sequence motif" description="'KMSKS' region" evidence="1">
    <location>
        <begin position="238"/>
        <end position="242"/>
    </location>
</feature>
<feature type="binding site" evidence="1">
    <location>
        <position position="241"/>
    </location>
    <ligand>
        <name>ATP</name>
        <dbReference type="ChEBI" id="CHEBI:30616"/>
    </ligand>
</feature>
<accession>Q5GSJ1</accession>
<reference key="1">
    <citation type="journal article" date="2005" name="PLoS Biol.">
        <title>The Wolbachia genome of Brugia malayi: endosymbiont evolution within a human pathogenic nematode.</title>
        <authorList>
            <person name="Foster J."/>
            <person name="Ganatra M."/>
            <person name="Kamal I."/>
            <person name="Ware J."/>
            <person name="Makarova K."/>
            <person name="Ivanova N."/>
            <person name="Bhattacharyya A."/>
            <person name="Kapatral V."/>
            <person name="Kumar S."/>
            <person name="Posfai J."/>
            <person name="Vincze T."/>
            <person name="Ingram J."/>
            <person name="Moran L."/>
            <person name="Lapidus A."/>
            <person name="Omelchenko M."/>
            <person name="Kyrpides N."/>
            <person name="Ghedin E."/>
            <person name="Wang S."/>
            <person name="Goltsman E."/>
            <person name="Joukov V."/>
            <person name="Ostrovskaya O."/>
            <person name="Tsukerman K."/>
            <person name="Mazur M."/>
            <person name="Comb D."/>
            <person name="Koonin E."/>
            <person name="Slatko B."/>
        </authorList>
    </citation>
    <scope>NUCLEOTIDE SEQUENCE [LARGE SCALE GENOMIC DNA]</scope>
    <source>
        <strain>TRS</strain>
    </source>
</reference>
<name>SYE1_WOLTR</name>
<evidence type="ECO:0000255" key="1">
    <source>
        <dbReference type="HAMAP-Rule" id="MF_00022"/>
    </source>
</evidence>
<dbReference type="EC" id="6.1.1.17" evidence="1"/>
<dbReference type="EMBL" id="AE017321">
    <property type="protein sequence ID" value="AAW71033.1"/>
    <property type="molecule type" value="Genomic_DNA"/>
</dbReference>
<dbReference type="RefSeq" id="WP_011256643.1">
    <property type="nucleotide sequence ID" value="NC_006833.1"/>
</dbReference>
<dbReference type="SMR" id="Q5GSJ1"/>
<dbReference type="STRING" id="292805.Wbm0445"/>
<dbReference type="KEGG" id="wbm:Wbm0445"/>
<dbReference type="eggNOG" id="COG0008">
    <property type="taxonomic scope" value="Bacteria"/>
</dbReference>
<dbReference type="HOGENOM" id="CLU_015768_6_1_5"/>
<dbReference type="Proteomes" id="UP000000534">
    <property type="component" value="Chromosome"/>
</dbReference>
<dbReference type="GO" id="GO:0005737">
    <property type="term" value="C:cytoplasm"/>
    <property type="evidence" value="ECO:0007669"/>
    <property type="project" value="UniProtKB-SubCell"/>
</dbReference>
<dbReference type="GO" id="GO:0005524">
    <property type="term" value="F:ATP binding"/>
    <property type="evidence" value="ECO:0007669"/>
    <property type="project" value="UniProtKB-UniRule"/>
</dbReference>
<dbReference type="GO" id="GO:0004818">
    <property type="term" value="F:glutamate-tRNA ligase activity"/>
    <property type="evidence" value="ECO:0007669"/>
    <property type="project" value="UniProtKB-UniRule"/>
</dbReference>
<dbReference type="GO" id="GO:0000049">
    <property type="term" value="F:tRNA binding"/>
    <property type="evidence" value="ECO:0007669"/>
    <property type="project" value="InterPro"/>
</dbReference>
<dbReference type="GO" id="GO:0006424">
    <property type="term" value="P:glutamyl-tRNA aminoacylation"/>
    <property type="evidence" value="ECO:0007669"/>
    <property type="project" value="UniProtKB-UniRule"/>
</dbReference>
<dbReference type="Gene3D" id="1.10.10.350">
    <property type="match status" value="1"/>
</dbReference>
<dbReference type="Gene3D" id="3.40.50.620">
    <property type="entry name" value="HUPs"/>
    <property type="match status" value="1"/>
</dbReference>
<dbReference type="HAMAP" id="MF_00022">
    <property type="entry name" value="Glu_tRNA_synth_type1"/>
    <property type="match status" value="1"/>
</dbReference>
<dbReference type="InterPro" id="IPR045462">
    <property type="entry name" value="aa-tRNA-synth_I_cd-bd"/>
</dbReference>
<dbReference type="InterPro" id="IPR020751">
    <property type="entry name" value="aa-tRNA-synth_I_codon-bd_sub2"/>
</dbReference>
<dbReference type="InterPro" id="IPR001412">
    <property type="entry name" value="aa-tRNA-synth_I_CS"/>
</dbReference>
<dbReference type="InterPro" id="IPR008925">
    <property type="entry name" value="aa_tRNA-synth_I_cd-bd_sf"/>
</dbReference>
<dbReference type="InterPro" id="IPR004527">
    <property type="entry name" value="Glu-tRNA-ligase_bac/mito"/>
</dbReference>
<dbReference type="InterPro" id="IPR000924">
    <property type="entry name" value="Glu/Gln-tRNA-synth"/>
</dbReference>
<dbReference type="InterPro" id="IPR020058">
    <property type="entry name" value="Glu/Gln-tRNA-synth_Ib_cat-dom"/>
</dbReference>
<dbReference type="InterPro" id="IPR049940">
    <property type="entry name" value="GluQ/Sye"/>
</dbReference>
<dbReference type="InterPro" id="IPR014729">
    <property type="entry name" value="Rossmann-like_a/b/a_fold"/>
</dbReference>
<dbReference type="NCBIfam" id="TIGR00464">
    <property type="entry name" value="gltX_bact"/>
    <property type="match status" value="1"/>
</dbReference>
<dbReference type="PANTHER" id="PTHR43311">
    <property type="entry name" value="GLUTAMATE--TRNA LIGASE"/>
    <property type="match status" value="1"/>
</dbReference>
<dbReference type="PANTHER" id="PTHR43311:SF2">
    <property type="entry name" value="GLUTAMATE--TRNA LIGASE, MITOCHONDRIAL-RELATED"/>
    <property type="match status" value="1"/>
</dbReference>
<dbReference type="Pfam" id="PF19269">
    <property type="entry name" value="Anticodon_2"/>
    <property type="match status" value="1"/>
</dbReference>
<dbReference type="Pfam" id="PF00749">
    <property type="entry name" value="tRNA-synt_1c"/>
    <property type="match status" value="1"/>
</dbReference>
<dbReference type="PRINTS" id="PR00987">
    <property type="entry name" value="TRNASYNTHGLU"/>
</dbReference>
<dbReference type="SUPFAM" id="SSF48163">
    <property type="entry name" value="An anticodon-binding domain of class I aminoacyl-tRNA synthetases"/>
    <property type="match status" value="1"/>
</dbReference>
<dbReference type="SUPFAM" id="SSF52374">
    <property type="entry name" value="Nucleotidylyl transferase"/>
    <property type="match status" value="1"/>
</dbReference>
<dbReference type="PROSITE" id="PS00178">
    <property type="entry name" value="AA_TRNA_LIGASE_I"/>
    <property type="match status" value="1"/>
</dbReference>
<sequence length="440" mass="50951">MLTRFAPSPTGYLHVGNARTALVCWMYTRSQNGKFLLRFDDTDLQRSDVKHIDSIVQDLRWICIDWDVIFKQSERFKHYNEVFLQLITKGHIYACYETKEELDIKRKLQLKHGLPPVYDRSALLLTEQEKFCYEQEGRKPHFRFKLDRNEVVKWNDEVKGEINIATSSISDPVVKREDGIYTYMLPSVIDDVDFNVTHVIRGEDHVTNTAVQIQMIQALEAKVPVFAHLPLLHFDDSKISKRKGGLDIKSIKENEIEPMALASYLIKLGTSDPIEAYVNMQSLIDSFDIKKFGSASAQFNLSEIHKLNSKVLQQMPFEMVKERLSQIGVNSPEFWYFIRNNIEKFSEVAEWWQICKSNIEPVVLDKEFIKIVLDALPQGDCNENTLSEWVKAIQQTVDIKLKDLFMQLRLALTGAKTGPELAKLLIFIGKENIIARLKKY</sequence>
<proteinExistence type="inferred from homology"/>
<gene>
    <name evidence="1" type="primary">gltX1</name>
    <name type="ordered locus">Wbm0445</name>
</gene>
<protein>
    <recommendedName>
        <fullName evidence="1">Glutamate--tRNA ligase 1</fullName>
        <ecNumber evidence="1">6.1.1.17</ecNumber>
    </recommendedName>
    <alternativeName>
        <fullName evidence="1">Glutamyl-tRNA synthetase 1</fullName>
        <shortName evidence="1">GluRS 1</shortName>
    </alternativeName>
</protein>
<keyword id="KW-0030">Aminoacyl-tRNA synthetase</keyword>
<keyword id="KW-0067">ATP-binding</keyword>
<keyword id="KW-0963">Cytoplasm</keyword>
<keyword id="KW-0436">Ligase</keyword>
<keyword id="KW-0547">Nucleotide-binding</keyword>
<keyword id="KW-0648">Protein biosynthesis</keyword>
<keyword id="KW-1185">Reference proteome</keyword>
<comment type="function">
    <text evidence="1">Catalyzes the attachment of glutamate to tRNA(Glu) in a two-step reaction: glutamate is first activated by ATP to form Glu-AMP and then transferred to the acceptor end of tRNA(Glu).</text>
</comment>
<comment type="catalytic activity">
    <reaction evidence="1">
        <text>tRNA(Glu) + L-glutamate + ATP = L-glutamyl-tRNA(Glu) + AMP + diphosphate</text>
        <dbReference type="Rhea" id="RHEA:23540"/>
        <dbReference type="Rhea" id="RHEA-COMP:9663"/>
        <dbReference type="Rhea" id="RHEA-COMP:9680"/>
        <dbReference type="ChEBI" id="CHEBI:29985"/>
        <dbReference type="ChEBI" id="CHEBI:30616"/>
        <dbReference type="ChEBI" id="CHEBI:33019"/>
        <dbReference type="ChEBI" id="CHEBI:78442"/>
        <dbReference type="ChEBI" id="CHEBI:78520"/>
        <dbReference type="ChEBI" id="CHEBI:456215"/>
        <dbReference type="EC" id="6.1.1.17"/>
    </reaction>
</comment>
<comment type="subunit">
    <text evidence="1">Monomer.</text>
</comment>
<comment type="subcellular location">
    <subcellularLocation>
        <location evidence="1">Cytoplasm</location>
    </subcellularLocation>
</comment>
<comment type="similarity">
    <text evidence="1">Belongs to the class-I aminoacyl-tRNA synthetase family. Glutamate--tRNA ligase type 1 subfamily.</text>
</comment>
<organism>
    <name type="scientific">Wolbachia sp. subsp. Brugia malayi (strain TRS)</name>
    <dbReference type="NCBI Taxonomy" id="292805"/>
    <lineage>
        <taxon>Bacteria</taxon>
        <taxon>Pseudomonadati</taxon>
        <taxon>Pseudomonadota</taxon>
        <taxon>Alphaproteobacteria</taxon>
        <taxon>Rickettsiales</taxon>
        <taxon>Anaplasmataceae</taxon>
        <taxon>Wolbachieae</taxon>
        <taxon>Wolbachia</taxon>
    </lineage>
</organism>